<gene>
    <name evidence="1" type="primary">atpA</name>
    <name type="ordered locus">SGO_0135</name>
</gene>
<proteinExistence type="inferred from homology"/>
<sequence>MSQGKIIKVSGPLVLASGMQEANIQDICRVGDLGLIGEIIEMRRDQASIQVYEETSGLGPGEPVITTGSPLSVELGPGLISQMFDGIQRPLERFQTITESDFLVRGVQLPNLDRETKWNFVPSLSVGDAVEAGDILGTVQETNLVEHRIMVPVGVSGRLANISAGSFTVEETVYEIEQAEGSIFKGTLMQKWPVRRGRPFAQKLIPVEPLVTGQRVIDTFFPVTKGGAAAVPGPFGAGKTVVQHQVAKFANVDIVIYVGCGERGNEMTDVLNEFPELIDPSTGQSIMQRTVLIANTSNMPVAAREASIYTGITIAEYFRDMGYSVAIMADSTSRWAEALREMSGRLEEMPGDEGYPAYLGSRIAEYYERAGRVKTLGSTAREGSITAIGAVSPPGGDISEPVTQNTLRIVKVFWGLDAQLAQRRHFPAINWLSSYSLYLDEVGAYIDQHEKIAWAEKVTKAMNILQKESELQEIVRLVGLDSLSEKDRLTMNAAKMIREDYLQQNAFDDVDTYTSFKKQVALLSNILTFDAEANRALELGAYFREIMEGTVELRDRIARSKFVHEDQLEKIQALSQTIEETLHQILAQGGLDNERH</sequence>
<reference key="1">
    <citation type="journal article" date="2007" name="J. Bacteriol.">
        <title>Genome-wide transcriptional changes in Streptococcus gordonii in response to competence signaling peptide.</title>
        <authorList>
            <person name="Vickerman M.M."/>
            <person name="Iobst S."/>
            <person name="Jesionowski A.M."/>
            <person name="Gill S.R."/>
        </authorList>
    </citation>
    <scope>NUCLEOTIDE SEQUENCE [LARGE SCALE GENOMIC DNA]</scope>
    <source>
        <strain>Challis / ATCC 35105 / BCRC 15272 / CH1 / DL1 / V288</strain>
    </source>
</reference>
<organism>
    <name type="scientific">Streptococcus gordonii (strain Challis / ATCC 35105 / BCRC 15272 / CH1 / DL1 / V288)</name>
    <dbReference type="NCBI Taxonomy" id="467705"/>
    <lineage>
        <taxon>Bacteria</taxon>
        <taxon>Bacillati</taxon>
        <taxon>Bacillota</taxon>
        <taxon>Bacilli</taxon>
        <taxon>Lactobacillales</taxon>
        <taxon>Streptococcaceae</taxon>
        <taxon>Streptococcus</taxon>
    </lineage>
</organism>
<feature type="chain" id="PRO_1000079066" description="V-type ATP synthase alpha chain">
    <location>
        <begin position="1"/>
        <end position="596"/>
    </location>
</feature>
<feature type="binding site" evidence="1">
    <location>
        <begin position="233"/>
        <end position="240"/>
    </location>
    <ligand>
        <name>ATP</name>
        <dbReference type="ChEBI" id="CHEBI:30616"/>
    </ligand>
</feature>
<name>VATA_STRGC</name>
<keyword id="KW-0066">ATP synthesis</keyword>
<keyword id="KW-0067">ATP-binding</keyword>
<keyword id="KW-0375">Hydrogen ion transport</keyword>
<keyword id="KW-0406">Ion transport</keyword>
<keyword id="KW-0547">Nucleotide-binding</keyword>
<keyword id="KW-1185">Reference proteome</keyword>
<keyword id="KW-1278">Translocase</keyword>
<keyword id="KW-0813">Transport</keyword>
<protein>
    <recommendedName>
        <fullName evidence="1">V-type ATP synthase alpha chain</fullName>
        <ecNumber evidence="1">7.1.2.2</ecNumber>
    </recommendedName>
    <alternativeName>
        <fullName evidence="1">V-ATPase subunit A</fullName>
    </alternativeName>
</protein>
<dbReference type="EC" id="7.1.2.2" evidence="1"/>
<dbReference type="EMBL" id="CP000725">
    <property type="protein sequence ID" value="ABV09814.1"/>
    <property type="molecule type" value="Genomic_DNA"/>
</dbReference>
<dbReference type="RefSeq" id="WP_011999681.1">
    <property type="nucleotide sequence ID" value="NC_009785.1"/>
</dbReference>
<dbReference type="SMR" id="A8AUJ7"/>
<dbReference type="STRING" id="467705.SGO_0135"/>
<dbReference type="KEGG" id="sgo:SGO_0135"/>
<dbReference type="eggNOG" id="COG1155">
    <property type="taxonomic scope" value="Bacteria"/>
</dbReference>
<dbReference type="HOGENOM" id="CLU_008162_3_1_9"/>
<dbReference type="Proteomes" id="UP000001131">
    <property type="component" value="Chromosome"/>
</dbReference>
<dbReference type="GO" id="GO:0045259">
    <property type="term" value="C:proton-transporting ATP synthase complex"/>
    <property type="evidence" value="ECO:0007669"/>
    <property type="project" value="UniProtKB-ARBA"/>
</dbReference>
<dbReference type="GO" id="GO:0005524">
    <property type="term" value="F:ATP binding"/>
    <property type="evidence" value="ECO:0007669"/>
    <property type="project" value="UniProtKB-UniRule"/>
</dbReference>
<dbReference type="GO" id="GO:0046933">
    <property type="term" value="F:proton-transporting ATP synthase activity, rotational mechanism"/>
    <property type="evidence" value="ECO:0007669"/>
    <property type="project" value="UniProtKB-UniRule"/>
</dbReference>
<dbReference type="GO" id="GO:0046961">
    <property type="term" value="F:proton-transporting ATPase activity, rotational mechanism"/>
    <property type="evidence" value="ECO:0007669"/>
    <property type="project" value="InterPro"/>
</dbReference>
<dbReference type="GO" id="GO:0042777">
    <property type="term" value="P:proton motive force-driven plasma membrane ATP synthesis"/>
    <property type="evidence" value="ECO:0007669"/>
    <property type="project" value="UniProtKB-UniRule"/>
</dbReference>
<dbReference type="CDD" id="cd18111">
    <property type="entry name" value="ATP-synt_V_A-type_alpha_C"/>
    <property type="match status" value="1"/>
</dbReference>
<dbReference type="CDD" id="cd18119">
    <property type="entry name" value="ATP-synt_V_A-type_alpha_N"/>
    <property type="match status" value="1"/>
</dbReference>
<dbReference type="CDD" id="cd01134">
    <property type="entry name" value="V_A-ATPase_A"/>
    <property type="match status" value="1"/>
</dbReference>
<dbReference type="FunFam" id="3.40.50.300:FF:000675">
    <property type="entry name" value="V-type ATP synthase alpha chain"/>
    <property type="match status" value="1"/>
</dbReference>
<dbReference type="FunFam" id="2.40.30.20:FF:000002">
    <property type="entry name" value="V-type proton ATPase catalytic subunit A"/>
    <property type="match status" value="1"/>
</dbReference>
<dbReference type="FunFam" id="2.40.50.100:FF:000008">
    <property type="entry name" value="V-type proton ATPase catalytic subunit A"/>
    <property type="match status" value="1"/>
</dbReference>
<dbReference type="Gene3D" id="2.40.30.20">
    <property type="match status" value="1"/>
</dbReference>
<dbReference type="Gene3D" id="2.40.50.100">
    <property type="match status" value="1"/>
</dbReference>
<dbReference type="Gene3D" id="1.10.1140.10">
    <property type="entry name" value="Bovine Mitochondrial F1-atpase, Atp Synthase Beta Chain, Chain D, domain 3"/>
    <property type="match status" value="1"/>
</dbReference>
<dbReference type="Gene3D" id="3.40.50.300">
    <property type="entry name" value="P-loop containing nucleotide triphosphate hydrolases"/>
    <property type="match status" value="1"/>
</dbReference>
<dbReference type="HAMAP" id="MF_00309">
    <property type="entry name" value="ATP_synth_A_arch"/>
    <property type="match status" value="1"/>
</dbReference>
<dbReference type="InterPro" id="IPR055190">
    <property type="entry name" value="ATP-synt_VA_C"/>
</dbReference>
<dbReference type="InterPro" id="IPR031686">
    <property type="entry name" value="ATP-synth_a_Xtn"/>
</dbReference>
<dbReference type="InterPro" id="IPR023366">
    <property type="entry name" value="ATP_synth_asu-like_sf"/>
</dbReference>
<dbReference type="InterPro" id="IPR004100">
    <property type="entry name" value="ATPase_F1/V1/A1_a/bsu_N"/>
</dbReference>
<dbReference type="InterPro" id="IPR036121">
    <property type="entry name" value="ATPase_F1/V1/A1_a/bsu_N_sf"/>
</dbReference>
<dbReference type="InterPro" id="IPR000194">
    <property type="entry name" value="ATPase_F1/V1/A1_a/bsu_nucl-bd"/>
</dbReference>
<dbReference type="InterPro" id="IPR024034">
    <property type="entry name" value="ATPase_F1/V1_b/a_C"/>
</dbReference>
<dbReference type="InterPro" id="IPR027417">
    <property type="entry name" value="P-loop_NTPase"/>
</dbReference>
<dbReference type="InterPro" id="IPR022878">
    <property type="entry name" value="V-ATPase_asu"/>
</dbReference>
<dbReference type="NCBIfam" id="NF003220">
    <property type="entry name" value="PRK04192.1"/>
    <property type="match status" value="1"/>
</dbReference>
<dbReference type="PANTHER" id="PTHR43607:SF1">
    <property type="entry name" value="H(+)-TRANSPORTING TWO-SECTOR ATPASE"/>
    <property type="match status" value="1"/>
</dbReference>
<dbReference type="PANTHER" id="PTHR43607">
    <property type="entry name" value="V-TYPE PROTON ATPASE CATALYTIC SUBUNIT A"/>
    <property type="match status" value="1"/>
</dbReference>
<dbReference type="Pfam" id="PF00006">
    <property type="entry name" value="ATP-synt_ab"/>
    <property type="match status" value="1"/>
</dbReference>
<dbReference type="Pfam" id="PF02874">
    <property type="entry name" value="ATP-synt_ab_N"/>
    <property type="match status" value="1"/>
</dbReference>
<dbReference type="Pfam" id="PF16886">
    <property type="entry name" value="ATP-synt_ab_Xtn"/>
    <property type="match status" value="1"/>
</dbReference>
<dbReference type="Pfam" id="PF22919">
    <property type="entry name" value="ATP-synt_VA_C"/>
    <property type="match status" value="1"/>
</dbReference>
<dbReference type="SUPFAM" id="SSF47917">
    <property type="entry name" value="C-terminal domain of alpha and beta subunits of F1 ATP synthase"/>
    <property type="match status" value="1"/>
</dbReference>
<dbReference type="SUPFAM" id="SSF50615">
    <property type="entry name" value="N-terminal domain of alpha and beta subunits of F1 ATP synthase"/>
    <property type="match status" value="1"/>
</dbReference>
<dbReference type="SUPFAM" id="SSF52540">
    <property type="entry name" value="P-loop containing nucleoside triphosphate hydrolases"/>
    <property type="match status" value="1"/>
</dbReference>
<evidence type="ECO:0000255" key="1">
    <source>
        <dbReference type="HAMAP-Rule" id="MF_00309"/>
    </source>
</evidence>
<accession>A8AUJ7</accession>
<comment type="function">
    <text evidence="1">Produces ATP from ADP in the presence of a proton gradient across the membrane. The V-type alpha chain is a catalytic subunit.</text>
</comment>
<comment type="catalytic activity">
    <reaction evidence="1">
        <text>ATP + H2O + 4 H(+)(in) = ADP + phosphate + 5 H(+)(out)</text>
        <dbReference type="Rhea" id="RHEA:57720"/>
        <dbReference type="ChEBI" id="CHEBI:15377"/>
        <dbReference type="ChEBI" id="CHEBI:15378"/>
        <dbReference type="ChEBI" id="CHEBI:30616"/>
        <dbReference type="ChEBI" id="CHEBI:43474"/>
        <dbReference type="ChEBI" id="CHEBI:456216"/>
        <dbReference type="EC" id="7.1.2.2"/>
    </reaction>
</comment>
<comment type="similarity">
    <text evidence="1">Belongs to the ATPase alpha/beta chains family.</text>
</comment>